<organism>
    <name type="scientific">Caenorhabditis elegans</name>
    <dbReference type="NCBI Taxonomy" id="6239"/>
    <lineage>
        <taxon>Eukaryota</taxon>
        <taxon>Metazoa</taxon>
        <taxon>Ecdysozoa</taxon>
        <taxon>Nematoda</taxon>
        <taxon>Chromadorea</taxon>
        <taxon>Rhabditida</taxon>
        <taxon>Rhabditina</taxon>
        <taxon>Rhabditomorpha</taxon>
        <taxon>Rhabditoidea</taxon>
        <taxon>Rhabditidae</taxon>
        <taxon>Peloderinae</taxon>
        <taxon>Caenorhabditis</taxon>
    </lineage>
</organism>
<comment type="function">
    <text evidence="1">Nematode cuticles are composed largely of collagen-like proteins. The cuticle functions both as an exoskeleton and as a barrier to protect the worm from its environment (By similarity).</text>
</comment>
<comment type="subunit">
    <text evidence="1">Collagen polypeptide chains are complexed within the cuticle by disulfide bonds and other types of covalent cross-links.</text>
</comment>
<comment type="similarity">
    <text evidence="4">Belongs to the cuticular collagen family.</text>
</comment>
<gene>
    <name type="primary">col-39</name>
    <name type="ORF">C09G5.4</name>
</gene>
<evidence type="ECO:0000250" key="1"/>
<evidence type="ECO:0000255" key="2"/>
<evidence type="ECO:0000256" key="3">
    <source>
        <dbReference type="SAM" id="MobiDB-lite"/>
    </source>
</evidence>
<evidence type="ECO:0000305" key="4"/>
<feature type="signal peptide" evidence="2">
    <location>
        <begin position="1"/>
        <end position="28"/>
    </location>
</feature>
<feature type="chain" id="PRO_0000006427" description="Cuticle collagen 39">
    <location>
        <begin position="29"/>
        <end position="323"/>
    </location>
</feature>
<feature type="region of interest" description="Disordered" evidence="3">
    <location>
        <begin position="80"/>
        <end position="293"/>
    </location>
</feature>
<feature type="region of interest" description="Triple-helical region">
    <location>
        <begin position="93"/>
        <end position="125"/>
    </location>
</feature>
<feature type="region of interest" description="Triple-helical region">
    <location>
        <begin position="138"/>
        <end position="200"/>
    </location>
</feature>
<feature type="region of interest" description="Triple-helical region">
    <location>
        <begin position="203"/>
        <end position="265"/>
    </location>
</feature>
<feature type="compositionally biased region" description="Polar residues" evidence="3">
    <location>
        <begin position="80"/>
        <end position="89"/>
    </location>
</feature>
<feature type="compositionally biased region" description="Gly residues" evidence="3">
    <location>
        <begin position="108"/>
        <end position="117"/>
    </location>
</feature>
<feature type="compositionally biased region" description="Low complexity" evidence="3">
    <location>
        <begin position="136"/>
        <end position="146"/>
    </location>
</feature>
<feature type="compositionally biased region" description="Gly residues" evidence="3">
    <location>
        <begin position="159"/>
        <end position="168"/>
    </location>
</feature>
<feature type="compositionally biased region" description="Low complexity" evidence="3">
    <location>
        <begin position="169"/>
        <end position="191"/>
    </location>
</feature>
<feature type="compositionally biased region" description="Gly residues" evidence="3">
    <location>
        <begin position="224"/>
        <end position="233"/>
    </location>
</feature>
<feature type="compositionally biased region" description="Low complexity" evidence="3">
    <location>
        <begin position="234"/>
        <end position="267"/>
    </location>
</feature>
<keyword id="KW-0176">Collagen</keyword>
<keyword id="KW-0193">Cuticle</keyword>
<keyword id="KW-1015">Disulfide bond</keyword>
<keyword id="KW-1185">Reference proteome</keyword>
<keyword id="KW-0677">Repeat</keyword>
<keyword id="KW-0732">Signal</keyword>
<name>COL39_CAEEL</name>
<proteinExistence type="inferred from homology"/>
<reference key="1">
    <citation type="journal article" date="1998" name="Science">
        <title>Genome sequence of the nematode C. elegans: a platform for investigating biology.</title>
        <authorList>
            <consortium name="The C. elegans sequencing consortium"/>
        </authorList>
    </citation>
    <scope>NUCLEOTIDE SEQUENCE [LARGE SCALE GENOMIC DNA]</scope>
    <source>
        <strain>Bristol N2</strain>
    </source>
</reference>
<accession>Q09455</accession>
<sequence>MTGPTCLAVVAGISGVFVFGALFSVAQIYNDISSFADNAHRELGEFKGFANDAWNSMVNHDDATRVARSVFVRRHKKHSQCNCGPQASNCPAGPPGPPGAPGDRGLDGQPGGAGNPGQPGVAGPKSHEQQECIKCPAGSPGPAGAPGAPGPQGPNGQPGHPGQGGSQGPAGPRGPAGDAGAPGQVGAPGNPGQAGRGGQRSHGLPGPSGAPGPQGPSGAPGQPGQSGGQGQQGPAGPAGPDGQPGQPGQDGQAGAPGNDGAPGADAAYCPCPSRSGSSSAVETGAAEQGYRHRAVAARHRNVIRRRVAKKRVVKKKRVVARQA</sequence>
<dbReference type="EMBL" id="Z46791">
    <property type="protein sequence ID" value="CAA86757.1"/>
    <property type="molecule type" value="Genomic_DNA"/>
</dbReference>
<dbReference type="PIR" id="T19142">
    <property type="entry name" value="T19142"/>
</dbReference>
<dbReference type="RefSeq" id="NP_496309.1">
    <property type="nucleotide sequence ID" value="NM_063908.7"/>
</dbReference>
<dbReference type="SMR" id="Q09455"/>
<dbReference type="FunCoup" id="Q09455">
    <property type="interactions" value="69"/>
</dbReference>
<dbReference type="STRING" id="6239.C09G5.4.1"/>
<dbReference type="PaxDb" id="6239-C09G5.4"/>
<dbReference type="PeptideAtlas" id="Q09455"/>
<dbReference type="EnsemblMetazoa" id="C09G5.4.1">
    <property type="protein sequence ID" value="C09G5.4.1"/>
    <property type="gene ID" value="WBGene00000616"/>
</dbReference>
<dbReference type="GeneID" id="174651"/>
<dbReference type="KEGG" id="cel:CELE_C09G5.4"/>
<dbReference type="UCSC" id="C09G5.4">
    <property type="organism name" value="c. elegans"/>
</dbReference>
<dbReference type="AGR" id="WB:WBGene00000616"/>
<dbReference type="CTD" id="174651"/>
<dbReference type="WormBase" id="C09G5.4">
    <property type="protein sequence ID" value="CE01484"/>
    <property type="gene ID" value="WBGene00000616"/>
    <property type="gene designation" value="col-39"/>
</dbReference>
<dbReference type="eggNOG" id="KOG3544">
    <property type="taxonomic scope" value="Eukaryota"/>
</dbReference>
<dbReference type="GeneTree" id="ENSGT00970000196208"/>
<dbReference type="HOGENOM" id="CLU_001074_4_3_1"/>
<dbReference type="InParanoid" id="Q09455"/>
<dbReference type="OMA" id="EQQECIK"/>
<dbReference type="OrthoDB" id="5876933at2759"/>
<dbReference type="PRO" id="PR:Q09455"/>
<dbReference type="Proteomes" id="UP000001940">
    <property type="component" value="Chromosome II"/>
</dbReference>
<dbReference type="Bgee" id="WBGene00000616">
    <property type="expression patterns" value="Expressed in larva and 2 other cell types or tissues"/>
</dbReference>
<dbReference type="GO" id="GO:0005581">
    <property type="term" value="C:collagen trimer"/>
    <property type="evidence" value="ECO:0007669"/>
    <property type="project" value="UniProtKB-KW"/>
</dbReference>
<dbReference type="GO" id="GO:0042302">
    <property type="term" value="F:structural constituent of cuticle"/>
    <property type="evidence" value="ECO:0007669"/>
    <property type="project" value="UniProtKB-KW"/>
</dbReference>
<dbReference type="InterPro" id="IPR002486">
    <property type="entry name" value="Col_cuticle_N"/>
</dbReference>
<dbReference type="InterPro" id="IPR008160">
    <property type="entry name" value="Collagen"/>
</dbReference>
<dbReference type="PANTHER" id="PTHR24637">
    <property type="entry name" value="COLLAGEN"/>
    <property type="match status" value="1"/>
</dbReference>
<dbReference type="PANTHER" id="PTHR24637:SF394">
    <property type="entry name" value="CUTICLE COLLAGEN 39"/>
    <property type="match status" value="1"/>
</dbReference>
<dbReference type="Pfam" id="PF01484">
    <property type="entry name" value="Col_cuticle_N"/>
    <property type="match status" value="1"/>
</dbReference>
<dbReference type="Pfam" id="PF01391">
    <property type="entry name" value="Collagen"/>
    <property type="match status" value="2"/>
</dbReference>
<dbReference type="SMART" id="SM01088">
    <property type="entry name" value="Col_cuticle_N"/>
    <property type="match status" value="1"/>
</dbReference>
<protein>
    <recommendedName>
        <fullName>Cuticle collagen 39</fullName>
    </recommendedName>
</protein>